<sequence>MSYNVRAAIIGGTGLYSLEGMELIEEIFPDTPWGKPSDKIKIGKYKGKLIAFLPRHGIGHFLSPPEVPNHANICALKQLGVEEIVAFSSVGSLREEIKPLDFVLPSQIIDRTRFRNSTYFGNGVVAHAPFAEPFSPNLSKRIAQTAKKIGLEIHLDKTLVCMEGPLFSTKAESHLYRSWGADIINMTVLPEAKLAREAEIAYQMICMSTDYDCWREGEESVTVEMVIANLTKNAETAKKLLSELIHVLGNGDDLSLKNSTRYSIITAPEKRNSETVKKLRVLFPEYF</sequence>
<accession>Q8CXR2</accession>
<keyword id="KW-0328">Glycosyltransferase</keyword>
<keyword id="KW-0660">Purine salvage</keyword>
<keyword id="KW-1185">Reference proteome</keyword>
<keyword id="KW-0808">Transferase</keyword>
<comment type="function">
    <text evidence="1">Catalyzes the reversible phosphorylation of S-methyl-5'-thioadenosine (MTA) to adenine and 5-methylthioribose-1-phosphate. Involved in the breakdown of MTA, a major by-product of polyamine biosynthesis. Responsible for the first step in the methionine salvage pathway after MTA has been generated from S-adenosylmethionine. Has broad substrate specificity with 6-aminopurine nucleosides as preferred substrates.</text>
</comment>
<comment type="catalytic activity">
    <reaction evidence="1">
        <text>S-methyl-5'-thioadenosine + phosphate = 5-(methylsulfanyl)-alpha-D-ribose 1-phosphate + adenine</text>
        <dbReference type="Rhea" id="RHEA:11852"/>
        <dbReference type="ChEBI" id="CHEBI:16708"/>
        <dbReference type="ChEBI" id="CHEBI:17509"/>
        <dbReference type="ChEBI" id="CHEBI:43474"/>
        <dbReference type="ChEBI" id="CHEBI:58533"/>
        <dbReference type="EC" id="2.4.2.28"/>
    </reaction>
</comment>
<comment type="pathway">
    <text evidence="1">Amino-acid biosynthesis; L-methionine biosynthesis via salvage pathway; S-methyl-5-thio-alpha-D-ribose 1-phosphate from S-methyl-5'-thioadenosine (phosphorylase route): step 1/1.</text>
</comment>
<comment type="subunit">
    <text evidence="1">Homohexamer. Dimer of a homotrimer.</text>
</comment>
<comment type="similarity">
    <text evidence="1">Belongs to the PNP/MTAP phosphorylase family. MTAP subfamily.</text>
</comment>
<evidence type="ECO:0000255" key="1">
    <source>
        <dbReference type="HAMAP-Rule" id="MF_01963"/>
    </source>
</evidence>
<gene>
    <name evidence="1" type="primary">mtnP</name>
    <name type="ordered locus">LA_4248</name>
</gene>
<organism>
    <name type="scientific">Leptospira interrogans serogroup Icterohaemorrhagiae serovar Lai (strain 56601)</name>
    <dbReference type="NCBI Taxonomy" id="189518"/>
    <lineage>
        <taxon>Bacteria</taxon>
        <taxon>Pseudomonadati</taxon>
        <taxon>Spirochaetota</taxon>
        <taxon>Spirochaetia</taxon>
        <taxon>Leptospirales</taxon>
        <taxon>Leptospiraceae</taxon>
        <taxon>Leptospira</taxon>
    </lineage>
</organism>
<name>MTAP_LEPIN</name>
<dbReference type="EC" id="2.4.2.28" evidence="1"/>
<dbReference type="EMBL" id="AE010300">
    <property type="protein sequence ID" value="AAN51446.1"/>
    <property type="molecule type" value="Genomic_DNA"/>
</dbReference>
<dbReference type="RefSeq" id="NP_714428.1">
    <property type="nucleotide sequence ID" value="NC_004342.2"/>
</dbReference>
<dbReference type="RefSeq" id="WP_000121285.1">
    <property type="nucleotide sequence ID" value="NC_004342.2"/>
</dbReference>
<dbReference type="SMR" id="Q8CXR2"/>
<dbReference type="STRING" id="189518.LA_4248"/>
<dbReference type="PaxDb" id="189518-LA_4248"/>
<dbReference type="EnsemblBacteria" id="AAN51446">
    <property type="protein sequence ID" value="AAN51446"/>
    <property type="gene ID" value="LA_4248"/>
</dbReference>
<dbReference type="KEGG" id="lil:LA_4248"/>
<dbReference type="PATRIC" id="fig|189518.3.peg.4221"/>
<dbReference type="HOGENOM" id="CLU_054456_0_2_12"/>
<dbReference type="InParanoid" id="Q8CXR2"/>
<dbReference type="OrthoDB" id="1523230at2"/>
<dbReference type="UniPathway" id="UPA00904">
    <property type="reaction ID" value="UER00873"/>
</dbReference>
<dbReference type="Proteomes" id="UP000001408">
    <property type="component" value="Chromosome I"/>
</dbReference>
<dbReference type="GO" id="GO:0005829">
    <property type="term" value="C:cytosol"/>
    <property type="evidence" value="ECO:0000318"/>
    <property type="project" value="GO_Central"/>
</dbReference>
<dbReference type="GO" id="GO:0017061">
    <property type="term" value="F:S-methyl-5-thioadenosine phosphorylase activity"/>
    <property type="evidence" value="ECO:0000318"/>
    <property type="project" value="GO_Central"/>
</dbReference>
<dbReference type="GO" id="GO:0019509">
    <property type="term" value="P:L-methionine salvage from methylthioadenosine"/>
    <property type="evidence" value="ECO:0000318"/>
    <property type="project" value="GO_Central"/>
</dbReference>
<dbReference type="GO" id="GO:0006166">
    <property type="term" value="P:purine ribonucleoside salvage"/>
    <property type="evidence" value="ECO:0007669"/>
    <property type="project" value="UniProtKB-KW"/>
</dbReference>
<dbReference type="CDD" id="cd09010">
    <property type="entry name" value="MTAP_SsMTAPII_like_MTIP"/>
    <property type="match status" value="1"/>
</dbReference>
<dbReference type="FunFam" id="3.40.50.1580:FF:000008">
    <property type="entry name" value="S-methyl-5'-thioadenosine phosphorylase"/>
    <property type="match status" value="1"/>
</dbReference>
<dbReference type="Gene3D" id="3.40.50.1580">
    <property type="entry name" value="Nucleoside phosphorylase domain"/>
    <property type="match status" value="1"/>
</dbReference>
<dbReference type="HAMAP" id="MF_01963">
    <property type="entry name" value="MTAP"/>
    <property type="match status" value="1"/>
</dbReference>
<dbReference type="InterPro" id="IPR010044">
    <property type="entry name" value="MTAP"/>
</dbReference>
<dbReference type="InterPro" id="IPR000845">
    <property type="entry name" value="Nucleoside_phosphorylase_d"/>
</dbReference>
<dbReference type="InterPro" id="IPR035994">
    <property type="entry name" value="Nucleoside_phosphorylase_sf"/>
</dbReference>
<dbReference type="InterPro" id="IPR018099">
    <property type="entry name" value="Purine_phosphorylase-2_CS"/>
</dbReference>
<dbReference type="NCBIfam" id="TIGR01694">
    <property type="entry name" value="MTAP"/>
    <property type="match status" value="1"/>
</dbReference>
<dbReference type="PANTHER" id="PTHR42679">
    <property type="entry name" value="S-METHYL-5'-THIOADENOSINE PHOSPHORYLASE"/>
    <property type="match status" value="1"/>
</dbReference>
<dbReference type="PANTHER" id="PTHR42679:SF2">
    <property type="entry name" value="S-METHYL-5'-THIOADENOSINE PHOSPHORYLASE"/>
    <property type="match status" value="1"/>
</dbReference>
<dbReference type="Pfam" id="PF01048">
    <property type="entry name" value="PNP_UDP_1"/>
    <property type="match status" value="1"/>
</dbReference>
<dbReference type="SUPFAM" id="SSF53167">
    <property type="entry name" value="Purine and uridine phosphorylases"/>
    <property type="match status" value="1"/>
</dbReference>
<dbReference type="PROSITE" id="PS01240">
    <property type="entry name" value="PNP_MTAP_2"/>
    <property type="match status" value="1"/>
</dbReference>
<protein>
    <recommendedName>
        <fullName evidence="1">S-methyl-5'-thioadenosine phosphorylase</fullName>
        <ecNumber evidence="1">2.4.2.28</ecNumber>
    </recommendedName>
    <alternativeName>
        <fullName evidence="1">5'-methylthioadenosine phosphorylase</fullName>
        <shortName evidence="1">MTA phosphorylase</shortName>
        <shortName evidence="1">MTAP</shortName>
    </alternativeName>
</protein>
<reference key="1">
    <citation type="journal article" date="2003" name="Nature">
        <title>Unique physiological and pathogenic features of Leptospira interrogans revealed by whole-genome sequencing.</title>
        <authorList>
            <person name="Ren S.-X."/>
            <person name="Fu G."/>
            <person name="Jiang X.-G."/>
            <person name="Zeng R."/>
            <person name="Miao Y.-G."/>
            <person name="Xu H."/>
            <person name="Zhang Y.-X."/>
            <person name="Xiong H."/>
            <person name="Lu G."/>
            <person name="Lu L.-F."/>
            <person name="Jiang H.-Q."/>
            <person name="Jia J."/>
            <person name="Tu Y.-F."/>
            <person name="Jiang J.-X."/>
            <person name="Gu W.-Y."/>
            <person name="Zhang Y.-Q."/>
            <person name="Cai Z."/>
            <person name="Sheng H.-H."/>
            <person name="Yin H.-F."/>
            <person name="Zhang Y."/>
            <person name="Zhu G.-F."/>
            <person name="Wan M."/>
            <person name="Huang H.-L."/>
            <person name="Qian Z."/>
            <person name="Wang S.-Y."/>
            <person name="Ma W."/>
            <person name="Yao Z.-J."/>
            <person name="Shen Y."/>
            <person name="Qiang B.-Q."/>
            <person name="Xia Q.-C."/>
            <person name="Guo X.-K."/>
            <person name="Danchin A."/>
            <person name="Saint Girons I."/>
            <person name="Somerville R.L."/>
            <person name="Wen Y.-M."/>
            <person name="Shi M.-H."/>
            <person name="Chen Z."/>
            <person name="Xu J.-G."/>
            <person name="Zhao G.-P."/>
        </authorList>
    </citation>
    <scope>NUCLEOTIDE SEQUENCE [LARGE SCALE GENOMIC DNA]</scope>
    <source>
        <strain>56601</strain>
    </source>
</reference>
<feature type="chain" id="PRO_0000184550" description="S-methyl-5'-thioadenosine phosphorylase">
    <location>
        <begin position="1"/>
        <end position="287"/>
    </location>
</feature>
<feature type="binding site" evidence="1">
    <location>
        <position position="13"/>
    </location>
    <ligand>
        <name>phosphate</name>
        <dbReference type="ChEBI" id="CHEBI:43474"/>
    </ligand>
</feature>
<feature type="binding site" evidence="1">
    <location>
        <begin position="55"/>
        <end position="56"/>
    </location>
    <ligand>
        <name>phosphate</name>
        <dbReference type="ChEBI" id="CHEBI:43474"/>
    </ligand>
</feature>
<feature type="binding site" evidence="1">
    <location>
        <position position="186"/>
    </location>
    <ligand>
        <name>substrate</name>
    </ligand>
</feature>
<feature type="binding site" evidence="1">
    <location>
        <position position="187"/>
    </location>
    <ligand>
        <name>phosphate</name>
        <dbReference type="ChEBI" id="CHEBI:43474"/>
    </ligand>
</feature>
<feature type="binding site" evidence="1">
    <location>
        <begin position="210"/>
        <end position="212"/>
    </location>
    <ligand>
        <name>substrate</name>
    </ligand>
</feature>
<feature type="site" description="Important for substrate specificity" evidence="1">
    <location>
        <position position="168"/>
    </location>
</feature>
<feature type="site" description="Important for substrate specificity" evidence="1">
    <location>
        <position position="223"/>
    </location>
</feature>
<proteinExistence type="inferred from homology"/>